<keyword id="KW-0021">Allosteric enzyme</keyword>
<keyword id="KW-0067">ATP-binding</keyword>
<keyword id="KW-0963">Cytoplasm</keyword>
<keyword id="KW-0418">Kinase</keyword>
<keyword id="KW-0547">Nucleotide-binding</keyword>
<keyword id="KW-0665">Pyrimidine biosynthesis</keyword>
<keyword id="KW-0808">Transferase</keyword>
<protein>
    <recommendedName>
        <fullName evidence="1">Uridylate kinase</fullName>
        <shortName evidence="1">UK</shortName>
        <ecNumber evidence="1">2.7.4.22</ecNumber>
    </recommendedName>
    <alternativeName>
        <fullName evidence="1">Uridine monophosphate kinase</fullName>
        <shortName evidence="1">UMP kinase</shortName>
        <shortName evidence="1">UMPK</shortName>
    </alternativeName>
</protein>
<sequence length="241" mass="25955">MATNAKPVYKRILLKLSGEALQGTEGFGIDASILDRMAQEIKELVELGIQVGVVIGGGNLFRGAGLAKAGMNRVVGDHMGMLATVMNGLAMRDALHRAYVNARLMSAIPLNGVCDNYSWAEAISLLRNNRVVILSAGTGNPFFTTDSAACLRGIEIEADVVLKATKVDGVFTADPAKDPSATMYDQLTYSEVLDKELKVMDLAAFTLARDHKLPIRVFNMNKPGALRRVVMGEKEGTLITE</sequence>
<dbReference type="EC" id="2.7.4.22" evidence="1"/>
<dbReference type="EMBL" id="CP000026">
    <property type="protein sequence ID" value="AAV76254.1"/>
    <property type="molecule type" value="Genomic_DNA"/>
</dbReference>
<dbReference type="RefSeq" id="WP_000224567.1">
    <property type="nucleotide sequence ID" value="NC_006511.1"/>
</dbReference>
<dbReference type="SMR" id="Q5PD61"/>
<dbReference type="KEGG" id="spt:SPA0225"/>
<dbReference type="HOGENOM" id="CLU_033861_0_0_6"/>
<dbReference type="UniPathway" id="UPA00159">
    <property type="reaction ID" value="UER00275"/>
</dbReference>
<dbReference type="Proteomes" id="UP000008185">
    <property type="component" value="Chromosome"/>
</dbReference>
<dbReference type="GO" id="GO:0005829">
    <property type="term" value="C:cytosol"/>
    <property type="evidence" value="ECO:0007669"/>
    <property type="project" value="TreeGrafter"/>
</dbReference>
<dbReference type="GO" id="GO:0005524">
    <property type="term" value="F:ATP binding"/>
    <property type="evidence" value="ECO:0007669"/>
    <property type="project" value="UniProtKB-KW"/>
</dbReference>
<dbReference type="GO" id="GO:0033862">
    <property type="term" value="F:UMP kinase activity"/>
    <property type="evidence" value="ECO:0007669"/>
    <property type="project" value="UniProtKB-EC"/>
</dbReference>
<dbReference type="GO" id="GO:0044210">
    <property type="term" value="P:'de novo' CTP biosynthetic process"/>
    <property type="evidence" value="ECO:0007669"/>
    <property type="project" value="UniProtKB-UniRule"/>
</dbReference>
<dbReference type="GO" id="GO:0006225">
    <property type="term" value="P:UDP biosynthetic process"/>
    <property type="evidence" value="ECO:0007669"/>
    <property type="project" value="TreeGrafter"/>
</dbReference>
<dbReference type="CDD" id="cd04254">
    <property type="entry name" value="AAK_UMPK-PyrH-Ec"/>
    <property type="match status" value="1"/>
</dbReference>
<dbReference type="FunFam" id="3.40.1160.10:FF:000001">
    <property type="entry name" value="Uridylate kinase"/>
    <property type="match status" value="1"/>
</dbReference>
<dbReference type="Gene3D" id="3.40.1160.10">
    <property type="entry name" value="Acetylglutamate kinase-like"/>
    <property type="match status" value="1"/>
</dbReference>
<dbReference type="HAMAP" id="MF_01220_B">
    <property type="entry name" value="PyrH_B"/>
    <property type="match status" value="1"/>
</dbReference>
<dbReference type="InterPro" id="IPR036393">
    <property type="entry name" value="AceGlu_kinase-like_sf"/>
</dbReference>
<dbReference type="InterPro" id="IPR001048">
    <property type="entry name" value="Asp/Glu/Uridylate_kinase"/>
</dbReference>
<dbReference type="InterPro" id="IPR011817">
    <property type="entry name" value="Uridylate_kinase"/>
</dbReference>
<dbReference type="InterPro" id="IPR015963">
    <property type="entry name" value="Uridylate_kinase_bac"/>
</dbReference>
<dbReference type="NCBIfam" id="TIGR02075">
    <property type="entry name" value="pyrH_bact"/>
    <property type="match status" value="1"/>
</dbReference>
<dbReference type="PANTHER" id="PTHR42833">
    <property type="entry name" value="URIDYLATE KINASE"/>
    <property type="match status" value="1"/>
</dbReference>
<dbReference type="PANTHER" id="PTHR42833:SF4">
    <property type="entry name" value="URIDYLATE KINASE PUMPKIN, CHLOROPLASTIC"/>
    <property type="match status" value="1"/>
</dbReference>
<dbReference type="Pfam" id="PF00696">
    <property type="entry name" value="AA_kinase"/>
    <property type="match status" value="1"/>
</dbReference>
<dbReference type="PIRSF" id="PIRSF005650">
    <property type="entry name" value="Uridylate_kin"/>
    <property type="match status" value="1"/>
</dbReference>
<dbReference type="SUPFAM" id="SSF53633">
    <property type="entry name" value="Carbamate kinase-like"/>
    <property type="match status" value="1"/>
</dbReference>
<accession>Q5PD61</accession>
<gene>
    <name evidence="1" type="primary">pyrH</name>
    <name type="ordered locus">SPA0225</name>
</gene>
<proteinExistence type="inferred from homology"/>
<evidence type="ECO:0000255" key="1">
    <source>
        <dbReference type="HAMAP-Rule" id="MF_01220"/>
    </source>
</evidence>
<feature type="chain" id="PRO_1000054003" description="Uridylate kinase">
    <location>
        <begin position="1"/>
        <end position="241"/>
    </location>
</feature>
<feature type="region of interest" description="Involved in allosteric activation by GTP" evidence="1">
    <location>
        <begin position="23"/>
        <end position="28"/>
    </location>
</feature>
<feature type="binding site" evidence="1">
    <location>
        <begin position="15"/>
        <end position="18"/>
    </location>
    <ligand>
        <name>ATP</name>
        <dbReference type="ChEBI" id="CHEBI:30616"/>
    </ligand>
</feature>
<feature type="binding site" evidence="1">
    <location>
        <position position="57"/>
    </location>
    <ligand>
        <name>UMP</name>
        <dbReference type="ChEBI" id="CHEBI:57865"/>
    </ligand>
</feature>
<feature type="binding site" evidence="1">
    <location>
        <position position="58"/>
    </location>
    <ligand>
        <name>ATP</name>
        <dbReference type="ChEBI" id="CHEBI:30616"/>
    </ligand>
</feature>
<feature type="binding site" evidence="1">
    <location>
        <position position="62"/>
    </location>
    <ligand>
        <name>ATP</name>
        <dbReference type="ChEBI" id="CHEBI:30616"/>
    </ligand>
</feature>
<feature type="binding site" evidence="1">
    <location>
        <position position="77"/>
    </location>
    <ligand>
        <name>UMP</name>
        <dbReference type="ChEBI" id="CHEBI:57865"/>
    </ligand>
</feature>
<feature type="binding site" evidence="1">
    <location>
        <begin position="138"/>
        <end position="145"/>
    </location>
    <ligand>
        <name>UMP</name>
        <dbReference type="ChEBI" id="CHEBI:57865"/>
    </ligand>
</feature>
<feature type="binding site" evidence="1">
    <location>
        <position position="165"/>
    </location>
    <ligand>
        <name>ATP</name>
        <dbReference type="ChEBI" id="CHEBI:30616"/>
    </ligand>
</feature>
<feature type="binding site" evidence="1">
    <location>
        <position position="171"/>
    </location>
    <ligand>
        <name>ATP</name>
        <dbReference type="ChEBI" id="CHEBI:30616"/>
    </ligand>
</feature>
<feature type="binding site" evidence="1">
    <location>
        <position position="174"/>
    </location>
    <ligand>
        <name>ATP</name>
        <dbReference type="ChEBI" id="CHEBI:30616"/>
    </ligand>
</feature>
<reference key="1">
    <citation type="journal article" date="2004" name="Nat. Genet.">
        <title>Comparison of genome degradation in Paratyphi A and Typhi, human-restricted serovars of Salmonella enterica that cause typhoid.</title>
        <authorList>
            <person name="McClelland M."/>
            <person name="Sanderson K.E."/>
            <person name="Clifton S.W."/>
            <person name="Latreille P."/>
            <person name="Porwollik S."/>
            <person name="Sabo A."/>
            <person name="Meyer R."/>
            <person name="Bieri T."/>
            <person name="Ozersky P."/>
            <person name="McLellan M."/>
            <person name="Harkins C.R."/>
            <person name="Wang C."/>
            <person name="Nguyen C."/>
            <person name="Berghoff A."/>
            <person name="Elliott G."/>
            <person name="Kohlberg S."/>
            <person name="Strong C."/>
            <person name="Du F."/>
            <person name="Carter J."/>
            <person name="Kremizki C."/>
            <person name="Layman D."/>
            <person name="Leonard S."/>
            <person name="Sun H."/>
            <person name="Fulton L."/>
            <person name="Nash W."/>
            <person name="Miner T."/>
            <person name="Minx P."/>
            <person name="Delehaunty K."/>
            <person name="Fronick C."/>
            <person name="Magrini V."/>
            <person name="Nhan M."/>
            <person name="Warren W."/>
            <person name="Florea L."/>
            <person name="Spieth J."/>
            <person name="Wilson R.K."/>
        </authorList>
    </citation>
    <scope>NUCLEOTIDE SEQUENCE [LARGE SCALE GENOMIC DNA]</scope>
    <source>
        <strain>ATCC 9150 / SARB42</strain>
    </source>
</reference>
<comment type="function">
    <text evidence="1">Catalyzes the reversible phosphorylation of UMP to UDP.</text>
</comment>
<comment type="catalytic activity">
    <reaction evidence="1">
        <text>UMP + ATP = UDP + ADP</text>
        <dbReference type="Rhea" id="RHEA:24400"/>
        <dbReference type="ChEBI" id="CHEBI:30616"/>
        <dbReference type="ChEBI" id="CHEBI:57865"/>
        <dbReference type="ChEBI" id="CHEBI:58223"/>
        <dbReference type="ChEBI" id="CHEBI:456216"/>
        <dbReference type="EC" id="2.7.4.22"/>
    </reaction>
</comment>
<comment type="activity regulation">
    <text evidence="1">Allosterically activated by GTP. Inhibited by UTP.</text>
</comment>
<comment type="pathway">
    <text evidence="1">Pyrimidine metabolism; CTP biosynthesis via de novo pathway; UDP from UMP (UMPK route): step 1/1.</text>
</comment>
<comment type="subunit">
    <text evidence="1">Homohexamer.</text>
</comment>
<comment type="subcellular location">
    <subcellularLocation>
        <location evidence="1">Cytoplasm</location>
    </subcellularLocation>
</comment>
<comment type="similarity">
    <text evidence="1">Belongs to the UMP kinase family.</text>
</comment>
<organism>
    <name type="scientific">Salmonella paratyphi A (strain ATCC 9150 / SARB42)</name>
    <dbReference type="NCBI Taxonomy" id="295319"/>
    <lineage>
        <taxon>Bacteria</taxon>
        <taxon>Pseudomonadati</taxon>
        <taxon>Pseudomonadota</taxon>
        <taxon>Gammaproteobacteria</taxon>
        <taxon>Enterobacterales</taxon>
        <taxon>Enterobacteriaceae</taxon>
        <taxon>Salmonella</taxon>
    </lineage>
</organism>
<name>PYRH_SALPA</name>